<reference key="1">
    <citation type="journal article" date="2010" name="J. Proteome Res.">
        <title>Molecular diversification of peptide toxins from the tarantula Haplopelma hainanum (Ornithoctonus hainana) venom based on transcriptomic, peptidomic, and genomic analyses.</title>
        <authorList>
            <person name="Tang X."/>
            <person name="Zhang Y."/>
            <person name="Hu W."/>
            <person name="Xu D."/>
            <person name="Tao H."/>
            <person name="Yang X."/>
            <person name="Li Y."/>
            <person name="Jiang L."/>
            <person name="Liang S."/>
        </authorList>
    </citation>
    <scope>NUCLEOTIDE SEQUENCE [LARGE SCALE GENOMIC DNA]</scope>
    <source>
        <tissue>Venom gland</tissue>
    </source>
</reference>
<feature type="signal peptide" evidence="2">
    <location>
        <begin position="1"/>
        <end position="21"/>
    </location>
</feature>
<feature type="propeptide" id="PRO_0000400564" evidence="1">
    <location>
        <begin position="22"/>
        <end position="48"/>
    </location>
</feature>
<feature type="peptide" id="PRO_0000400565" description="Mu-theraphotoxin-Hhn2i">
    <location>
        <begin position="49"/>
        <end position="81"/>
    </location>
</feature>
<feature type="modified residue" description="Leucine amide" evidence="1">
    <location>
        <position position="81"/>
    </location>
</feature>
<feature type="disulfide bond" evidence="1">
    <location>
        <begin position="50"/>
        <end position="65"/>
    </location>
</feature>
<feature type="disulfide bond" evidence="1">
    <location>
        <begin position="57"/>
        <end position="70"/>
    </location>
</feature>
<feature type="disulfide bond" evidence="1">
    <location>
        <begin position="64"/>
        <end position="77"/>
    </location>
</feature>
<evidence type="ECO:0000250" key="1"/>
<evidence type="ECO:0000255" key="2"/>
<evidence type="ECO:0000305" key="3"/>
<name>H3P01_CYRHA</name>
<accession>D2Y2I6</accession>
<keyword id="KW-0027">Amidation</keyword>
<keyword id="KW-1015">Disulfide bond</keyword>
<keyword id="KW-0872">Ion channel impairing toxin</keyword>
<keyword id="KW-0960">Knottin</keyword>
<keyword id="KW-0528">Neurotoxin</keyword>
<keyword id="KW-0638">Presynaptic neurotoxin</keyword>
<keyword id="KW-0964">Secreted</keyword>
<keyword id="KW-0732">Signal</keyword>
<keyword id="KW-0800">Toxin</keyword>
<keyword id="KW-0738">Voltage-gated sodium channel impairing toxin</keyword>
<sequence length="83" mass="9146">MKASMFLALAGLVLLFVVGYASESEEKEFPRELLSKIFAVDDFKGEERGCKGFGDSCTPGKNECCPNYACSSKHKWCKVNLGK</sequence>
<protein>
    <recommendedName>
        <fullName>Mu-theraphotoxin-Hhn2i</fullName>
        <shortName>Mu-TRTX-Hhn2i</shortName>
    </recommendedName>
    <alternativeName>
        <fullName>Hainantoxin-III-16</fullName>
        <shortName>HNTX-III-16</shortName>
    </alternativeName>
</protein>
<comment type="function">
    <text evidence="1">Lethal neurotoxin. Selectively blocks tetrodotoxin-sensitive voltage-gated sodium channels (Nav). Does not affect tetrodotoxin-resistant voltage-gated sodium channels or calcium channels (By similarity).</text>
</comment>
<comment type="subunit">
    <text evidence="1">Monomer.</text>
</comment>
<comment type="subcellular location">
    <subcellularLocation>
        <location evidence="1">Secreted</location>
    </subcellularLocation>
</comment>
<comment type="tissue specificity">
    <text>Expressed by the venom gland.</text>
</comment>
<comment type="domain">
    <text evidence="1">The presence of a 'disulfide through disulfide knot' structurally defines this protein as a knottin.</text>
</comment>
<comment type="similarity">
    <text evidence="3">Belongs to the neurotoxin 10 (Hwtx-1) family. 15 (Hntx-3) subfamily.</text>
</comment>
<organism>
    <name type="scientific">Cyriopagopus hainanus</name>
    <name type="common">Chinese bird spider</name>
    <name type="synonym">Haplopelma hainanum</name>
    <dbReference type="NCBI Taxonomy" id="209901"/>
    <lineage>
        <taxon>Eukaryota</taxon>
        <taxon>Metazoa</taxon>
        <taxon>Ecdysozoa</taxon>
        <taxon>Arthropoda</taxon>
        <taxon>Chelicerata</taxon>
        <taxon>Arachnida</taxon>
        <taxon>Araneae</taxon>
        <taxon>Mygalomorphae</taxon>
        <taxon>Theraphosidae</taxon>
        <taxon>Haplopelma</taxon>
    </lineage>
</organism>
<proteinExistence type="inferred from homology"/>
<dbReference type="EMBL" id="GU293063">
    <property type="protein sequence ID" value="ADB56879.1"/>
    <property type="molecule type" value="Genomic_DNA"/>
</dbReference>
<dbReference type="SMR" id="D2Y2I6"/>
<dbReference type="ArachnoServer" id="AS001766">
    <property type="toxin name" value="mu-theraphotoxin-Hhn2i"/>
</dbReference>
<dbReference type="GO" id="GO:0005576">
    <property type="term" value="C:extracellular region"/>
    <property type="evidence" value="ECO:0007669"/>
    <property type="project" value="UniProtKB-SubCell"/>
</dbReference>
<dbReference type="GO" id="GO:0044231">
    <property type="term" value="C:host cell presynaptic membrane"/>
    <property type="evidence" value="ECO:0007669"/>
    <property type="project" value="UniProtKB-KW"/>
</dbReference>
<dbReference type="GO" id="GO:0008200">
    <property type="term" value="F:ion channel inhibitor activity"/>
    <property type="evidence" value="ECO:0007669"/>
    <property type="project" value="InterPro"/>
</dbReference>
<dbReference type="GO" id="GO:0017080">
    <property type="term" value="F:sodium channel regulator activity"/>
    <property type="evidence" value="ECO:0007669"/>
    <property type="project" value="UniProtKB-KW"/>
</dbReference>
<dbReference type="GO" id="GO:0090729">
    <property type="term" value="F:toxin activity"/>
    <property type="evidence" value="ECO:0007669"/>
    <property type="project" value="UniProtKB-KW"/>
</dbReference>
<dbReference type="InterPro" id="IPR011696">
    <property type="entry name" value="Huwentoxin-1"/>
</dbReference>
<dbReference type="InterPro" id="IPR013140">
    <property type="entry name" value="Huwentoxin_CS1"/>
</dbReference>
<dbReference type="Pfam" id="PF07740">
    <property type="entry name" value="Toxin_12"/>
    <property type="match status" value="1"/>
</dbReference>
<dbReference type="SUPFAM" id="SSF57059">
    <property type="entry name" value="omega toxin-like"/>
    <property type="match status" value="1"/>
</dbReference>
<dbReference type="PROSITE" id="PS60021">
    <property type="entry name" value="HWTX_1"/>
    <property type="match status" value="1"/>
</dbReference>